<keyword id="KW-0217">Developmental protein</keyword>
<keyword id="KW-0221">Differentiation</keyword>
<keyword id="KW-0472">Membrane</keyword>
<keyword id="KW-0597">Phosphoprotein</keyword>
<keyword id="KW-1185">Reference proteome</keyword>
<keyword id="KW-0744">Spermatogenesis</keyword>
<keyword id="KW-0812">Transmembrane</keyword>
<keyword id="KW-1133">Transmembrane helix</keyword>
<feature type="chain" id="PRO_0000304722" description="Outer dense fiber protein 4">
    <location>
        <begin position="1"/>
        <end position="257"/>
    </location>
</feature>
<feature type="transmembrane region" description="Helical" evidence="3">
    <location>
        <begin position="80"/>
        <end position="100"/>
    </location>
</feature>
<feature type="transmembrane region" description="Helical" evidence="3">
    <location>
        <begin position="152"/>
        <end position="172"/>
    </location>
</feature>
<feature type="transmembrane region" description="Helical" evidence="3">
    <location>
        <begin position="179"/>
        <end position="199"/>
    </location>
</feature>
<feature type="region of interest" description="Disordered" evidence="4">
    <location>
        <begin position="1"/>
        <end position="41"/>
    </location>
</feature>
<feature type="compositionally biased region" description="Basic and acidic residues" evidence="4">
    <location>
        <begin position="11"/>
        <end position="30"/>
    </location>
</feature>
<feature type="modified residue" description="Phosphoserine" evidence="2">
    <location>
        <position position="64"/>
    </location>
</feature>
<feature type="sequence variant" id="VAR_035060" description="In dbSNP:rs12943505." evidence="6">
    <original>W</original>
    <variation>R</variation>
    <location>
        <position position="34"/>
    </location>
</feature>
<feature type="sequence variant" id="VAR_035061" description="In dbSNP:rs12601097." evidence="5 6 7">
    <original>V</original>
    <variation>M</variation>
    <location>
        <position position="98"/>
    </location>
</feature>
<feature type="sequence variant" id="VAR_035062" description="In dbSNP:rs12936935." evidence="5 6 7">
    <original>Y</original>
    <variation>C</variation>
    <location>
        <position position="139"/>
    </location>
</feature>
<reference key="1">
    <citation type="journal article" date="2003" name="Mol. Hum. Reprod.">
        <title>Molecular cloning and characterization of the human orthologue of the oppo 1 gene encoding a sperm tail protein.</title>
        <authorList>
            <person name="Kitamura K."/>
            <person name="Miyagawa Y."/>
            <person name="Iguchi N."/>
            <person name="Nishimura H."/>
            <person name="Tanaka H."/>
            <person name="Nishimune Y."/>
        </authorList>
    </citation>
    <scope>NUCLEOTIDE SEQUENCE [MRNA]</scope>
    <scope>TISSUE SPECIFICITY</scope>
    <scope>VARIANTS MET-98 AND CYS-139</scope>
</reference>
<reference key="2">
    <citation type="submission" date="2003-02" db="EMBL/GenBank/DDBJ databases">
        <authorList>
            <person name="Miyamoto T."/>
        </authorList>
    </citation>
    <scope>NUCLEOTIDE SEQUENCE [MRNA]</scope>
    <scope>VARIANTS MET-98 AND CYS-139</scope>
</reference>
<reference key="3">
    <citation type="journal article" date="2004" name="Genome Res.">
        <title>The status, quality, and expansion of the NIH full-length cDNA project: the Mammalian Gene Collection (MGC).</title>
        <authorList>
            <consortium name="The MGC Project Team"/>
        </authorList>
    </citation>
    <scope>NUCLEOTIDE SEQUENCE [LARGE SCALE MRNA]</scope>
    <scope>VARIANTS ARG-34; MET-98 AND CYS-139</scope>
</reference>
<protein>
    <recommendedName>
        <fullName>Outer dense fiber protein 4</fullName>
    </recommendedName>
    <alternativeName>
        <fullName>Outer dense fiber of sperm tails protein 4</fullName>
    </alternativeName>
    <alternativeName>
        <fullName>Testis-specific protein oppo 1</fullName>
        <shortName>hOPPO1</shortName>
    </alternativeName>
</protein>
<name>ODFP4_HUMAN</name>
<dbReference type="EMBL" id="AB081120">
    <property type="protein sequence ID" value="BAC15594.1"/>
    <property type="molecule type" value="mRNA"/>
</dbReference>
<dbReference type="EMBL" id="AY237799">
    <property type="protein sequence ID" value="AAO89569.1"/>
    <property type="molecule type" value="mRNA"/>
</dbReference>
<dbReference type="EMBL" id="BC112010">
    <property type="protein sequence ID" value="AAI12011.1"/>
    <property type="molecule type" value="mRNA"/>
</dbReference>
<dbReference type="EMBL" id="BC112014">
    <property type="protein sequence ID" value="AAI12015.1"/>
    <property type="molecule type" value="mRNA"/>
</dbReference>
<dbReference type="CCDS" id="CCDS11140.1"/>
<dbReference type="RefSeq" id="NP_694552.2">
    <property type="nucleotide sequence ID" value="NM_153007.5"/>
</dbReference>
<dbReference type="BioGRID" id="127017">
    <property type="interactions" value="26"/>
</dbReference>
<dbReference type="FunCoup" id="Q2M2E3">
    <property type="interactions" value="8"/>
</dbReference>
<dbReference type="IntAct" id="Q2M2E3">
    <property type="interactions" value="23"/>
</dbReference>
<dbReference type="STRING" id="9606.ENSP00000331086"/>
<dbReference type="iPTMnet" id="Q2M2E3"/>
<dbReference type="PhosphoSitePlus" id="Q2M2E3"/>
<dbReference type="BioMuta" id="ODF4"/>
<dbReference type="DMDM" id="158564291"/>
<dbReference type="PaxDb" id="9606-ENSP00000331086"/>
<dbReference type="Antibodypedia" id="42968">
    <property type="antibodies" value="51 antibodies from 14 providers"/>
</dbReference>
<dbReference type="DNASU" id="146852"/>
<dbReference type="Ensembl" id="ENST00000328248.7">
    <property type="protein sequence ID" value="ENSP00000331086.2"/>
    <property type="gene ID" value="ENSG00000184650.11"/>
</dbReference>
<dbReference type="GeneID" id="146852"/>
<dbReference type="KEGG" id="hsa:146852"/>
<dbReference type="MANE-Select" id="ENST00000328248.7">
    <property type="protein sequence ID" value="ENSP00000331086.2"/>
    <property type="RefSeq nucleotide sequence ID" value="NM_153007.5"/>
    <property type="RefSeq protein sequence ID" value="NP_694552.2"/>
</dbReference>
<dbReference type="UCSC" id="uc002gle.2">
    <property type="organism name" value="human"/>
</dbReference>
<dbReference type="AGR" id="HGNC:19056"/>
<dbReference type="CTD" id="146852"/>
<dbReference type="DisGeNET" id="146852"/>
<dbReference type="GeneCards" id="ODF4"/>
<dbReference type="HGNC" id="HGNC:19056">
    <property type="gene designation" value="ODF4"/>
</dbReference>
<dbReference type="HPA" id="ENSG00000184650">
    <property type="expression patterns" value="Tissue enriched (testis)"/>
</dbReference>
<dbReference type="MIM" id="610097">
    <property type="type" value="gene"/>
</dbReference>
<dbReference type="neXtProt" id="NX_Q2M2E3"/>
<dbReference type="OpenTargets" id="ENSG00000184650"/>
<dbReference type="PharmGKB" id="PA134978853"/>
<dbReference type="VEuPathDB" id="HostDB:ENSG00000184650"/>
<dbReference type="eggNOG" id="ENOG502SXVG">
    <property type="taxonomic scope" value="Eukaryota"/>
</dbReference>
<dbReference type="GeneTree" id="ENSGT00940000163675"/>
<dbReference type="HOGENOM" id="CLU_062754_1_0_1"/>
<dbReference type="InParanoid" id="Q2M2E3"/>
<dbReference type="OMA" id="FHWMAQV"/>
<dbReference type="OrthoDB" id="9620006at2759"/>
<dbReference type="PAN-GO" id="Q2M2E3">
    <property type="GO annotations" value="1 GO annotation based on evolutionary models"/>
</dbReference>
<dbReference type="PhylomeDB" id="Q2M2E3"/>
<dbReference type="TreeFam" id="TF338228"/>
<dbReference type="PathwayCommons" id="Q2M2E3"/>
<dbReference type="SignaLink" id="Q2M2E3"/>
<dbReference type="BioGRID-ORCS" id="146852">
    <property type="hits" value="12 hits in 1130 CRISPR screens"/>
</dbReference>
<dbReference type="GenomeRNAi" id="146852"/>
<dbReference type="Pharos" id="Q2M2E3">
    <property type="development level" value="Tbio"/>
</dbReference>
<dbReference type="PRO" id="PR:Q2M2E3"/>
<dbReference type="Proteomes" id="UP000005640">
    <property type="component" value="Chromosome 17"/>
</dbReference>
<dbReference type="RNAct" id="Q2M2E3">
    <property type="molecule type" value="protein"/>
</dbReference>
<dbReference type="Bgee" id="ENSG00000184650">
    <property type="expression patterns" value="Expressed in left testis and 43 other cell types or tissues"/>
</dbReference>
<dbReference type="ExpressionAtlas" id="Q2M2E3">
    <property type="expression patterns" value="baseline and differential"/>
</dbReference>
<dbReference type="GO" id="GO:0016020">
    <property type="term" value="C:membrane"/>
    <property type="evidence" value="ECO:0007669"/>
    <property type="project" value="UniProtKB-SubCell"/>
</dbReference>
<dbReference type="GO" id="GO:0030154">
    <property type="term" value="P:cell differentiation"/>
    <property type="evidence" value="ECO:0007669"/>
    <property type="project" value="UniProtKB-KW"/>
</dbReference>
<dbReference type="GO" id="GO:0007283">
    <property type="term" value="P:spermatogenesis"/>
    <property type="evidence" value="ECO:0007669"/>
    <property type="project" value="UniProtKB-KW"/>
</dbReference>
<comment type="function">
    <text evidence="1">Component of the outer dense fibers (ODF) of spermatozoa which could be involved in sperm tail structure, sperm movement and general organization of cellular cytoskeleton.</text>
</comment>
<comment type="interaction">
    <interactant intactId="EBI-12382569">
        <id>Q2M2E3</id>
    </interactant>
    <interactant intactId="EBI-9686780">
        <id>Q06432</id>
        <label>CACNG1</label>
    </interactant>
    <organismsDiffer>false</organismsDiffer>
    <experiments>3</experiments>
</comment>
<comment type="interaction">
    <interactant intactId="EBI-12382569">
        <id>Q2M2E3</id>
    </interactant>
    <interactant intactId="EBI-4280101">
        <id>P21926</id>
        <label>CD9</label>
    </interactant>
    <organismsDiffer>false</organismsDiffer>
    <experiments>3</experiments>
</comment>
<comment type="interaction">
    <interactant intactId="EBI-12382569">
        <id>Q2M2E3</id>
    </interactant>
    <interactant intactId="EBI-358858">
        <id>O14735</id>
        <label>CDIPT</label>
    </interactant>
    <organismsDiffer>false</organismsDiffer>
    <experiments>3</experiments>
</comment>
<comment type="interaction">
    <interactant intactId="EBI-12382569">
        <id>Q2M2E3</id>
    </interactant>
    <interactant intactId="EBI-12208021">
        <id>Q8TBE1</id>
        <label>CNIH3</label>
    </interactant>
    <organismsDiffer>false</organismsDiffer>
    <experiments>3</experiments>
</comment>
<comment type="interaction">
    <interactant intactId="EBI-12382569">
        <id>Q2M2E3</id>
    </interactant>
    <interactant intactId="EBI-12074168">
        <id>P81534</id>
        <label>DEFB103B</label>
    </interactant>
    <organismsDiffer>false</organismsDiffer>
    <experiments>3</experiments>
</comment>
<comment type="interaction">
    <interactant intactId="EBI-12382569">
        <id>Q2M2E3</id>
    </interactant>
    <interactant intactId="EBI-3915253">
        <id>Q15125</id>
        <label>EBP</label>
    </interactant>
    <organismsDiffer>false</organismsDiffer>
    <experiments>3</experiments>
</comment>
<comment type="interaction">
    <interactant intactId="EBI-12382569">
        <id>Q2M2E3</id>
    </interactant>
    <interactant intactId="EBI-3267258">
        <id>Q86VI4</id>
        <label>LAPTM4B</label>
    </interactant>
    <organismsDiffer>false</organismsDiffer>
    <experiments>3</experiments>
</comment>
<comment type="interaction">
    <interactant intactId="EBI-12382569">
        <id>Q2M2E3</id>
    </interactant>
    <interactant intactId="EBI-2341610">
        <id>Q9NX47</id>
        <label>MARCHF5</label>
    </interactant>
    <organismsDiffer>false</organismsDiffer>
    <experiments>3</experiments>
</comment>
<comment type="interaction">
    <interactant intactId="EBI-12382569">
        <id>Q2M2E3</id>
    </interactant>
    <interactant intactId="EBI-16439278">
        <id>Q6FHY5</id>
        <label>MEOX2</label>
    </interactant>
    <organismsDiffer>false</organismsDiffer>
    <experiments>3</experiments>
</comment>
<comment type="interaction">
    <interactant intactId="EBI-12382569">
        <id>Q2M2E3</id>
    </interactant>
    <interactant intactId="EBI-12070086">
        <id>Q5J8X5</id>
        <label>MS4A13</label>
    </interactant>
    <organismsDiffer>false</organismsDiffer>
    <experiments>3</experiments>
</comment>
<comment type="interaction">
    <interactant intactId="EBI-12382569">
        <id>Q2M2E3</id>
    </interactant>
    <interactant intactId="EBI-10317425">
        <id>Q9NZG7</id>
        <label>NINJ2</label>
    </interactant>
    <organismsDiffer>false</organismsDiffer>
    <experiments>3</experiments>
</comment>
<comment type="interaction">
    <interactant intactId="EBI-12382569">
        <id>Q2M2E3</id>
    </interactant>
    <interactant intactId="EBI-8636004">
        <id>Q96GQ5</id>
        <label>RUSF1</label>
    </interactant>
    <organismsDiffer>false</organismsDiffer>
    <experiments>3</experiments>
</comment>
<comment type="interaction">
    <interactant intactId="EBI-12382569">
        <id>Q2M2E3</id>
    </interactant>
    <interactant intactId="EBI-3917235">
        <id>Q9NTJ5</id>
        <label>SACM1L</label>
    </interactant>
    <organismsDiffer>false</organismsDiffer>
    <experiments>3</experiments>
</comment>
<comment type="interaction">
    <interactant intactId="EBI-12382569">
        <id>Q2M2E3</id>
    </interactant>
    <interactant intactId="EBI-10281975">
        <id>Q96AG3</id>
        <label>SLC25A46</label>
    </interactant>
    <organismsDiffer>false</organismsDiffer>
    <experiments>3</experiments>
</comment>
<comment type="interaction">
    <interactant intactId="EBI-12382569">
        <id>Q2M2E3</id>
    </interactant>
    <interactant intactId="EBI-10314552">
        <id>Q9NVC3</id>
        <label>SLC38A7</label>
    </interactant>
    <organismsDiffer>false</organismsDiffer>
    <experiments>3</experiments>
</comment>
<comment type="interaction">
    <interactant intactId="EBI-12382569">
        <id>Q2M2E3</id>
    </interactant>
    <interactant intactId="EBI-1045825">
        <id>P55061</id>
        <label>TMBIM6</label>
    </interactant>
    <organismsDiffer>false</organismsDiffer>
    <experiments>7</experiments>
</comment>
<comment type="interaction">
    <interactant intactId="EBI-12382569">
        <id>Q2M2E3</id>
    </interactant>
    <interactant intactId="EBI-11528917">
        <id>Q8WW34-2</id>
        <label>TMEM239</label>
    </interactant>
    <organismsDiffer>false</organismsDiffer>
    <experiments>3</experiments>
</comment>
<comment type="interaction">
    <interactant intactId="EBI-12382569">
        <id>Q2M2E3</id>
    </interactant>
    <interactant intactId="EBI-10826510">
        <id>Q96B49</id>
        <label>TOMM6</label>
    </interactant>
    <organismsDiffer>false</organismsDiffer>
    <experiments>3</experiments>
</comment>
<comment type="interaction">
    <interactant intactId="EBI-12382569">
        <id>Q2M2E3</id>
    </interactant>
    <interactant intactId="EBI-11988865">
        <id>A5PKU2</id>
        <label>TUSC5</label>
    </interactant>
    <organismsDiffer>false</organismsDiffer>
    <experiments>3</experiments>
</comment>
<comment type="interaction">
    <interactant intactId="EBI-12382569">
        <id>Q2M2E3</id>
    </interactant>
    <interactant intactId="EBI-751210">
        <id>Q96EC8</id>
        <label>YIPF6</label>
    </interactant>
    <organismsDiffer>false</organismsDiffer>
    <experiments>3</experiments>
</comment>
<comment type="subcellular location">
    <subcellularLocation>
        <location evidence="8">Membrane</location>
        <topology evidence="8">Multi-pass membrane protein</topology>
    </subcellularLocation>
</comment>
<comment type="tissue specificity">
    <text evidence="5">Expressed in testis and sperm; especially localized to sperm tail (at protein level).</text>
</comment>
<organism>
    <name type="scientific">Homo sapiens</name>
    <name type="common">Human</name>
    <dbReference type="NCBI Taxonomy" id="9606"/>
    <lineage>
        <taxon>Eukaryota</taxon>
        <taxon>Metazoa</taxon>
        <taxon>Chordata</taxon>
        <taxon>Craniata</taxon>
        <taxon>Vertebrata</taxon>
        <taxon>Euteleostomi</taxon>
        <taxon>Mammalia</taxon>
        <taxon>Eutheria</taxon>
        <taxon>Euarchontoglires</taxon>
        <taxon>Primates</taxon>
        <taxon>Haplorrhini</taxon>
        <taxon>Catarrhini</taxon>
        <taxon>Hominidae</taxon>
        <taxon>Homo</taxon>
    </lineage>
</organism>
<gene>
    <name type="primary">ODF4</name>
    <name type="synonym">OPPO1</name>
</gene>
<sequence>MDAEYSGNEFPRSEGERDQHQRPGKERKSGEAGWGTGELGQDGRLLSSTLSLSSNRSLGQRQNSPLPFQWRITHSFRWMAQVLASELSLVAFILLLVVAFSKKWLDLSRSLFYQRWPVDVSNRIHTSAHVMSMGLLHFYKSRSCSDLENGKVTFIFSTLMLFPINIWIFELERNVSIPIGWSYFIGWLVLILYFTCAILCYFNHKSFWSLILSHPSGAVSCSSSFGSVEESPRAQTITDTPITQEGVLDPEQKDTHV</sequence>
<proteinExistence type="evidence at protein level"/>
<accession>Q2M2E3</accession>
<accession>Q8J021</accession>
<evidence type="ECO:0000250" key="1"/>
<evidence type="ECO:0000250" key="2">
    <source>
        <dbReference type="UniProtKB" id="Q8VI88"/>
    </source>
</evidence>
<evidence type="ECO:0000255" key="3"/>
<evidence type="ECO:0000256" key="4">
    <source>
        <dbReference type="SAM" id="MobiDB-lite"/>
    </source>
</evidence>
<evidence type="ECO:0000269" key="5">
    <source>
    </source>
</evidence>
<evidence type="ECO:0000269" key="6">
    <source>
    </source>
</evidence>
<evidence type="ECO:0000269" key="7">
    <source ref="2"/>
</evidence>
<evidence type="ECO:0000305" key="8"/>